<accession>Q3JMH0</accession>
<evidence type="ECO:0000255" key="1">
    <source>
        <dbReference type="HAMAP-Rule" id="MF_01458"/>
    </source>
</evidence>
<evidence type="ECO:0000256" key="2">
    <source>
        <dbReference type="SAM" id="MobiDB-lite"/>
    </source>
</evidence>
<evidence type="ECO:0000305" key="3"/>
<gene>
    <name evidence="1" type="primary">ftsH</name>
    <name type="ordered locus">BURPS1710b_A0074</name>
</gene>
<comment type="function">
    <text evidence="1">Acts as a processive, ATP-dependent zinc metallopeptidase for both cytoplasmic and membrane proteins. Plays a role in the quality control of integral membrane proteins.</text>
</comment>
<comment type="cofactor">
    <cofactor evidence="1">
        <name>Zn(2+)</name>
        <dbReference type="ChEBI" id="CHEBI:29105"/>
    </cofactor>
    <text evidence="1">Binds 1 zinc ion per subunit.</text>
</comment>
<comment type="subunit">
    <text evidence="1">Homohexamer.</text>
</comment>
<comment type="subcellular location">
    <subcellularLocation>
        <location evidence="1">Cell inner membrane</location>
        <topology evidence="1">Multi-pass membrane protein</topology>
        <orientation evidence="1">Cytoplasmic side</orientation>
    </subcellularLocation>
</comment>
<comment type="similarity">
    <text evidence="1">In the central section; belongs to the AAA ATPase family.</text>
</comment>
<comment type="similarity">
    <text evidence="1">In the C-terminal section; belongs to the peptidase M41 family.</text>
</comment>
<comment type="sequence caution" evidence="3">
    <conflict type="erroneous initiation">
        <sequence resource="EMBL-CDS" id="ABA52267"/>
    </conflict>
    <text>Extended N-terminus.</text>
</comment>
<organism>
    <name type="scientific">Burkholderia pseudomallei (strain 1710b)</name>
    <dbReference type="NCBI Taxonomy" id="320372"/>
    <lineage>
        <taxon>Bacteria</taxon>
        <taxon>Pseudomonadati</taxon>
        <taxon>Pseudomonadota</taxon>
        <taxon>Betaproteobacteria</taxon>
        <taxon>Burkholderiales</taxon>
        <taxon>Burkholderiaceae</taxon>
        <taxon>Burkholderia</taxon>
        <taxon>pseudomallei group</taxon>
    </lineage>
</organism>
<dbReference type="EC" id="3.4.24.-" evidence="1"/>
<dbReference type="EMBL" id="CP000125">
    <property type="protein sequence ID" value="ABA52267.1"/>
    <property type="status" value="ALT_INIT"/>
    <property type="molecule type" value="Genomic_DNA"/>
</dbReference>
<dbReference type="RefSeq" id="WP_004528329.1">
    <property type="nucleotide sequence ID" value="NC_007435.1"/>
</dbReference>
<dbReference type="SMR" id="Q3JMH0"/>
<dbReference type="EnsemblBacteria" id="ABA52267">
    <property type="protein sequence ID" value="ABA52267"/>
    <property type="gene ID" value="BURPS1710b_A0074"/>
</dbReference>
<dbReference type="KEGG" id="bpm:BURPS1710b_A0074"/>
<dbReference type="HOGENOM" id="CLU_000688_16_2_4"/>
<dbReference type="Proteomes" id="UP000002700">
    <property type="component" value="Chromosome II"/>
</dbReference>
<dbReference type="GO" id="GO:0005886">
    <property type="term" value="C:plasma membrane"/>
    <property type="evidence" value="ECO:0007669"/>
    <property type="project" value="UniProtKB-SubCell"/>
</dbReference>
<dbReference type="GO" id="GO:0005524">
    <property type="term" value="F:ATP binding"/>
    <property type="evidence" value="ECO:0007669"/>
    <property type="project" value="UniProtKB-UniRule"/>
</dbReference>
<dbReference type="GO" id="GO:0016887">
    <property type="term" value="F:ATP hydrolysis activity"/>
    <property type="evidence" value="ECO:0007669"/>
    <property type="project" value="UniProtKB-UniRule"/>
</dbReference>
<dbReference type="GO" id="GO:0004176">
    <property type="term" value="F:ATP-dependent peptidase activity"/>
    <property type="evidence" value="ECO:0007669"/>
    <property type="project" value="InterPro"/>
</dbReference>
<dbReference type="GO" id="GO:0004222">
    <property type="term" value="F:metalloendopeptidase activity"/>
    <property type="evidence" value="ECO:0007669"/>
    <property type="project" value="InterPro"/>
</dbReference>
<dbReference type="GO" id="GO:0008270">
    <property type="term" value="F:zinc ion binding"/>
    <property type="evidence" value="ECO:0007669"/>
    <property type="project" value="UniProtKB-UniRule"/>
</dbReference>
<dbReference type="GO" id="GO:0030163">
    <property type="term" value="P:protein catabolic process"/>
    <property type="evidence" value="ECO:0007669"/>
    <property type="project" value="UniProtKB-UniRule"/>
</dbReference>
<dbReference type="GO" id="GO:0006508">
    <property type="term" value="P:proteolysis"/>
    <property type="evidence" value="ECO:0007669"/>
    <property type="project" value="UniProtKB-KW"/>
</dbReference>
<dbReference type="CDD" id="cd19501">
    <property type="entry name" value="RecA-like_FtsH"/>
    <property type="match status" value="1"/>
</dbReference>
<dbReference type="FunFam" id="1.10.8.60:FF:000001">
    <property type="entry name" value="ATP-dependent zinc metalloprotease FtsH"/>
    <property type="match status" value="1"/>
</dbReference>
<dbReference type="FunFam" id="1.20.58.760:FF:000001">
    <property type="entry name" value="ATP-dependent zinc metalloprotease FtsH"/>
    <property type="match status" value="1"/>
</dbReference>
<dbReference type="FunFam" id="3.40.50.300:FF:000001">
    <property type="entry name" value="ATP-dependent zinc metalloprotease FtsH"/>
    <property type="match status" value="1"/>
</dbReference>
<dbReference type="Gene3D" id="1.10.8.60">
    <property type="match status" value="1"/>
</dbReference>
<dbReference type="Gene3D" id="3.40.50.300">
    <property type="entry name" value="P-loop containing nucleotide triphosphate hydrolases"/>
    <property type="match status" value="1"/>
</dbReference>
<dbReference type="Gene3D" id="1.20.58.760">
    <property type="entry name" value="Peptidase M41"/>
    <property type="match status" value="1"/>
</dbReference>
<dbReference type="HAMAP" id="MF_01458">
    <property type="entry name" value="FtsH"/>
    <property type="match status" value="1"/>
</dbReference>
<dbReference type="InterPro" id="IPR003593">
    <property type="entry name" value="AAA+_ATPase"/>
</dbReference>
<dbReference type="InterPro" id="IPR041569">
    <property type="entry name" value="AAA_lid_3"/>
</dbReference>
<dbReference type="InterPro" id="IPR003959">
    <property type="entry name" value="ATPase_AAA_core"/>
</dbReference>
<dbReference type="InterPro" id="IPR003960">
    <property type="entry name" value="ATPase_AAA_CS"/>
</dbReference>
<dbReference type="InterPro" id="IPR005936">
    <property type="entry name" value="FtsH"/>
</dbReference>
<dbReference type="InterPro" id="IPR027417">
    <property type="entry name" value="P-loop_NTPase"/>
</dbReference>
<dbReference type="InterPro" id="IPR000642">
    <property type="entry name" value="Peptidase_M41"/>
</dbReference>
<dbReference type="InterPro" id="IPR037219">
    <property type="entry name" value="Peptidase_M41-like"/>
</dbReference>
<dbReference type="NCBIfam" id="TIGR01241">
    <property type="entry name" value="FtsH_fam"/>
    <property type="match status" value="1"/>
</dbReference>
<dbReference type="PANTHER" id="PTHR23076:SF97">
    <property type="entry name" value="ATP-DEPENDENT ZINC METALLOPROTEASE YME1L1"/>
    <property type="match status" value="1"/>
</dbReference>
<dbReference type="PANTHER" id="PTHR23076">
    <property type="entry name" value="METALLOPROTEASE M41 FTSH"/>
    <property type="match status" value="1"/>
</dbReference>
<dbReference type="Pfam" id="PF00004">
    <property type="entry name" value="AAA"/>
    <property type="match status" value="1"/>
</dbReference>
<dbReference type="Pfam" id="PF17862">
    <property type="entry name" value="AAA_lid_3"/>
    <property type="match status" value="1"/>
</dbReference>
<dbReference type="Pfam" id="PF01434">
    <property type="entry name" value="Peptidase_M41"/>
    <property type="match status" value="1"/>
</dbReference>
<dbReference type="SMART" id="SM00382">
    <property type="entry name" value="AAA"/>
    <property type="match status" value="1"/>
</dbReference>
<dbReference type="SUPFAM" id="SSF140990">
    <property type="entry name" value="FtsH protease domain-like"/>
    <property type="match status" value="1"/>
</dbReference>
<dbReference type="SUPFAM" id="SSF52540">
    <property type="entry name" value="P-loop containing nucleoside triphosphate hydrolases"/>
    <property type="match status" value="1"/>
</dbReference>
<dbReference type="PROSITE" id="PS00674">
    <property type="entry name" value="AAA"/>
    <property type="match status" value="1"/>
</dbReference>
<proteinExistence type="inferred from homology"/>
<feature type="chain" id="PRO_0000400334" description="ATP-dependent zinc metalloprotease FtsH">
    <location>
        <begin position="1"/>
        <end position="666"/>
    </location>
</feature>
<feature type="topological domain" description="Cytoplasmic" evidence="1">
    <location>
        <begin position="1"/>
        <end position="6"/>
    </location>
</feature>
<feature type="transmembrane region" description="Helical" evidence="1">
    <location>
        <begin position="7"/>
        <end position="27"/>
    </location>
</feature>
<feature type="topological domain" description="Periplasmic" evidence="1">
    <location>
        <begin position="28"/>
        <end position="116"/>
    </location>
</feature>
<feature type="transmembrane region" description="Helical" evidence="1">
    <location>
        <begin position="117"/>
        <end position="137"/>
    </location>
</feature>
<feature type="topological domain" description="Cytoplasmic" evidence="1">
    <location>
        <begin position="138"/>
        <end position="666"/>
    </location>
</feature>
<feature type="region of interest" description="Disordered" evidence="2">
    <location>
        <begin position="612"/>
        <end position="666"/>
    </location>
</feature>
<feature type="compositionally biased region" description="Basic and acidic residues" evidence="2">
    <location>
        <begin position="620"/>
        <end position="630"/>
    </location>
</feature>
<feature type="compositionally biased region" description="Basic and acidic residues" evidence="2">
    <location>
        <begin position="649"/>
        <end position="666"/>
    </location>
</feature>
<feature type="active site" evidence="1">
    <location>
        <position position="433"/>
    </location>
</feature>
<feature type="binding site" evidence="1">
    <location>
        <begin position="210"/>
        <end position="217"/>
    </location>
    <ligand>
        <name>ATP</name>
        <dbReference type="ChEBI" id="CHEBI:30616"/>
    </ligand>
</feature>
<feature type="binding site" evidence="1">
    <location>
        <position position="432"/>
    </location>
    <ligand>
        <name>Zn(2+)</name>
        <dbReference type="ChEBI" id="CHEBI:29105"/>
        <note>catalytic</note>
    </ligand>
</feature>
<feature type="binding site" evidence="1">
    <location>
        <position position="436"/>
    </location>
    <ligand>
        <name>Zn(2+)</name>
        <dbReference type="ChEBI" id="CHEBI:29105"/>
        <note>catalytic</note>
    </ligand>
</feature>
<feature type="binding site" evidence="1">
    <location>
        <position position="509"/>
    </location>
    <ligand>
        <name>Zn(2+)</name>
        <dbReference type="ChEBI" id="CHEBI:29105"/>
        <note>catalytic</note>
    </ligand>
</feature>
<name>FTSH_BURP1</name>
<protein>
    <recommendedName>
        <fullName evidence="1">ATP-dependent zinc metalloprotease FtsH</fullName>
        <ecNumber evidence="1">3.4.24.-</ecNumber>
    </recommendedName>
</protein>
<sequence>MKSETGYMGFVVVLVFMVLLALQLATLSAPATQIAYSDFRKLAAAAQLDDLEVSPTRITGVLRSASAAAALPASDAEAIKRAGTPWRFSTKRVTDERLIDTLAATGTRYRGADDDTWIGTLASWIVPIAVFALVWNLMLRRPRGGLQDWSGVGKSKPRVYVEAKTGIDFDDIAGIDEAKAELQQIVAFLRAPARYQRLGGKIPKGVLIVGAPGTGKTLLAKAVAGEAGVPFFSTSGSSFVEMFVGVGAARVRDLFEQAQQKAPCIIFIDELDALGKVRGAGLASGNDEREQTLNQLLVEMDGFQANSGVILMAATNRPEILDPALLRPGRFDRHIAIDRPDLTGRRQILSVHVKHVKLGPDVDLGELASRTPGFVGADLANIVNEAALHAAELDKPAIDMSDFDEAIDRAMTGMERKSRVMSEREKITIAHHEAGHALIAQTRAHSDPVKKVSIIPRGIAALGYTQQVPTEDRYVLRKSELLDRLDVLLGGRVAEEIVFGDVSTGAENDLERATEMARHMVARYGMSERIGLATFGDADTQGLSPLVWQRGGERCSESTATRIDDEIQRLLAEAHDRVSRTLKERRGALERIAGYLLEHEVVDHDKLVRLVNDEPTPEPGARDPGGDAAKRSGIGAAPAKPPAEVGSAELRDPARKADNADHSVPQ</sequence>
<reference key="1">
    <citation type="journal article" date="2010" name="Genome Biol. Evol.">
        <title>Continuing evolution of Burkholderia mallei through genome reduction and large-scale rearrangements.</title>
        <authorList>
            <person name="Losada L."/>
            <person name="Ronning C.M."/>
            <person name="DeShazer D."/>
            <person name="Woods D."/>
            <person name="Fedorova N."/>
            <person name="Kim H.S."/>
            <person name="Shabalina S.A."/>
            <person name="Pearson T.R."/>
            <person name="Brinkac L."/>
            <person name="Tan P."/>
            <person name="Nandi T."/>
            <person name="Crabtree J."/>
            <person name="Badger J."/>
            <person name="Beckstrom-Sternberg S."/>
            <person name="Saqib M."/>
            <person name="Schutzer S.E."/>
            <person name="Keim P."/>
            <person name="Nierman W.C."/>
        </authorList>
    </citation>
    <scope>NUCLEOTIDE SEQUENCE [LARGE SCALE GENOMIC DNA]</scope>
    <source>
        <strain>1710b</strain>
    </source>
</reference>
<keyword id="KW-0067">ATP-binding</keyword>
<keyword id="KW-0997">Cell inner membrane</keyword>
<keyword id="KW-1003">Cell membrane</keyword>
<keyword id="KW-0378">Hydrolase</keyword>
<keyword id="KW-0472">Membrane</keyword>
<keyword id="KW-0479">Metal-binding</keyword>
<keyword id="KW-0482">Metalloprotease</keyword>
<keyword id="KW-0547">Nucleotide-binding</keyword>
<keyword id="KW-0645">Protease</keyword>
<keyword id="KW-0812">Transmembrane</keyword>
<keyword id="KW-1133">Transmembrane helix</keyword>
<keyword id="KW-0862">Zinc</keyword>